<feature type="chain" id="PRO_0000313813" description="Rieske domain-containing protein">
    <location>
        <begin position="1"/>
        <end position="157"/>
    </location>
</feature>
<feature type="domain" description="Rieske 1" evidence="1">
    <location>
        <begin position="16"/>
        <end position="94"/>
    </location>
</feature>
<feature type="domain" description="Rieske 2" evidence="1">
    <location>
        <begin position="17"/>
        <end position="131"/>
    </location>
</feature>
<feature type="binding site" evidence="1">
    <location>
        <position position="57"/>
    </location>
    <ligand>
        <name>[2Fe-2S] cluster</name>
        <dbReference type="ChEBI" id="CHEBI:190135"/>
    </ligand>
</feature>
<feature type="binding site" evidence="1">
    <location>
        <position position="59"/>
    </location>
    <ligand>
        <name>[2Fe-2S] cluster</name>
        <dbReference type="ChEBI" id="CHEBI:190135"/>
    </ligand>
</feature>
<feature type="binding site" evidence="1">
    <location>
        <position position="80"/>
    </location>
    <ligand>
        <name>[2Fe-2S] cluster</name>
        <dbReference type="ChEBI" id="CHEBI:190135"/>
    </ligand>
</feature>
<feature type="binding site" evidence="1">
    <location>
        <position position="83"/>
    </location>
    <ligand>
        <name>[2Fe-2S] cluster</name>
        <dbReference type="ChEBI" id="CHEBI:190135"/>
    </ligand>
</feature>
<feature type="modified residue" description="N-acetylmethionine" evidence="3">
    <location>
        <position position="1"/>
    </location>
</feature>
<feature type="modified residue" description="Phosphoserine" evidence="4">
    <location>
        <position position="6"/>
    </location>
</feature>
<feature type="splice variant" id="VSP_044452" description="In isoform 2." evidence="2">
    <original>M</original>
    <variation>MLKCFRNCLRPSSLSTLPLQYGILFPKLLACLVHLHFGHFSSAVISVTSFYLSM</variation>
    <location>
        <position position="1"/>
    </location>
</feature>
<sequence>MNLDGSAQDPEKREYSSVCVGREDDIKKSERMTAVVHDREVVIFYHKGEYHAMDIRCYHSGGPLHLGDIEDFDGRPCIVCPWHKYKITLATGEGLYQSINPKDPSAKPKWCSKGIKQRIHTVTVDNGNIYVTLSNEPFKCDSDFYATGDFKVIKSSS</sequence>
<evidence type="ECO:0000255" key="1">
    <source>
        <dbReference type="PROSITE-ProRule" id="PRU00628"/>
    </source>
</evidence>
<evidence type="ECO:0000303" key="2">
    <source ref="4"/>
</evidence>
<evidence type="ECO:0007744" key="3">
    <source>
    </source>
</evidence>
<evidence type="ECO:0007744" key="4">
    <source>
    </source>
</evidence>
<name>RFESD_HUMAN</name>
<organism>
    <name type="scientific">Homo sapiens</name>
    <name type="common">Human</name>
    <dbReference type="NCBI Taxonomy" id="9606"/>
    <lineage>
        <taxon>Eukaryota</taxon>
        <taxon>Metazoa</taxon>
        <taxon>Chordata</taxon>
        <taxon>Craniata</taxon>
        <taxon>Vertebrata</taxon>
        <taxon>Euteleostomi</taxon>
        <taxon>Mammalia</taxon>
        <taxon>Eutheria</taxon>
        <taxon>Euarchontoglires</taxon>
        <taxon>Primates</taxon>
        <taxon>Haplorrhini</taxon>
        <taxon>Catarrhini</taxon>
        <taxon>Hominidae</taxon>
        <taxon>Homo</taxon>
    </lineage>
</organism>
<keyword id="KW-0001">2Fe-2S</keyword>
<keyword id="KW-0007">Acetylation</keyword>
<keyword id="KW-0025">Alternative splicing</keyword>
<keyword id="KW-0408">Iron</keyword>
<keyword id="KW-0411">Iron-sulfur</keyword>
<keyword id="KW-0479">Metal-binding</keyword>
<keyword id="KW-0597">Phosphoprotein</keyword>
<keyword id="KW-1267">Proteomics identification</keyword>
<keyword id="KW-1185">Reference proteome</keyword>
<keyword id="KW-0677">Repeat</keyword>
<proteinExistence type="evidence at protein level"/>
<accession>Q8TAC1</accession>
<accession>J3KPH1</accession>
<gene>
    <name type="primary">RFESD</name>
</gene>
<protein>
    <recommendedName>
        <fullName>Rieske domain-containing protein</fullName>
    </recommendedName>
</protein>
<reference key="1">
    <citation type="journal article" date="2004" name="Nature">
        <title>The DNA sequence and comparative analysis of human chromosome 5.</title>
        <authorList>
            <person name="Schmutz J."/>
            <person name="Martin J."/>
            <person name="Terry A."/>
            <person name="Couronne O."/>
            <person name="Grimwood J."/>
            <person name="Lowry S."/>
            <person name="Gordon L.A."/>
            <person name="Scott D."/>
            <person name="Xie G."/>
            <person name="Huang W."/>
            <person name="Hellsten U."/>
            <person name="Tran-Gyamfi M."/>
            <person name="She X."/>
            <person name="Prabhakar S."/>
            <person name="Aerts A."/>
            <person name="Altherr M."/>
            <person name="Bajorek E."/>
            <person name="Black S."/>
            <person name="Branscomb E."/>
            <person name="Caoile C."/>
            <person name="Challacombe J.F."/>
            <person name="Chan Y.M."/>
            <person name="Denys M."/>
            <person name="Detter J.C."/>
            <person name="Escobar J."/>
            <person name="Flowers D."/>
            <person name="Fotopulos D."/>
            <person name="Glavina T."/>
            <person name="Gomez M."/>
            <person name="Gonzales E."/>
            <person name="Goodstein D."/>
            <person name="Grigoriev I."/>
            <person name="Groza M."/>
            <person name="Hammon N."/>
            <person name="Hawkins T."/>
            <person name="Haydu L."/>
            <person name="Israni S."/>
            <person name="Jett J."/>
            <person name="Kadner K."/>
            <person name="Kimball H."/>
            <person name="Kobayashi A."/>
            <person name="Lopez F."/>
            <person name="Lou Y."/>
            <person name="Martinez D."/>
            <person name="Medina C."/>
            <person name="Morgan J."/>
            <person name="Nandkeshwar R."/>
            <person name="Noonan J.P."/>
            <person name="Pitluck S."/>
            <person name="Pollard M."/>
            <person name="Predki P."/>
            <person name="Priest J."/>
            <person name="Ramirez L."/>
            <person name="Retterer J."/>
            <person name="Rodriguez A."/>
            <person name="Rogers S."/>
            <person name="Salamov A."/>
            <person name="Salazar A."/>
            <person name="Thayer N."/>
            <person name="Tice H."/>
            <person name="Tsai M."/>
            <person name="Ustaszewska A."/>
            <person name="Vo N."/>
            <person name="Wheeler J."/>
            <person name="Wu K."/>
            <person name="Yang J."/>
            <person name="Dickson M."/>
            <person name="Cheng J.-F."/>
            <person name="Eichler E.E."/>
            <person name="Olsen A."/>
            <person name="Pennacchio L.A."/>
            <person name="Rokhsar D.S."/>
            <person name="Richardson P."/>
            <person name="Lucas S.M."/>
            <person name="Myers R.M."/>
            <person name="Rubin E.M."/>
        </authorList>
    </citation>
    <scope>NUCLEOTIDE SEQUENCE [LARGE SCALE GENOMIC DNA]</scope>
</reference>
<reference key="2">
    <citation type="submission" date="2005-07" db="EMBL/GenBank/DDBJ databases">
        <authorList>
            <person name="Mural R.J."/>
            <person name="Istrail S."/>
            <person name="Sutton G."/>
            <person name="Florea L."/>
            <person name="Halpern A.L."/>
            <person name="Mobarry C.M."/>
            <person name="Lippert R."/>
            <person name="Walenz B."/>
            <person name="Shatkay H."/>
            <person name="Dew I."/>
            <person name="Miller J.R."/>
            <person name="Flanigan M.J."/>
            <person name="Edwards N.J."/>
            <person name="Bolanos R."/>
            <person name="Fasulo D."/>
            <person name="Halldorsson B.V."/>
            <person name="Hannenhalli S."/>
            <person name="Turner R."/>
            <person name="Yooseph S."/>
            <person name="Lu F."/>
            <person name="Nusskern D.R."/>
            <person name="Shue B.C."/>
            <person name="Zheng X.H."/>
            <person name="Zhong F."/>
            <person name="Delcher A.L."/>
            <person name="Huson D.H."/>
            <person name="Kravitz S.A."/>
            <person name="Mouchard L."/>
            <person name="Reinert K."/>
            <person name="Remington K.A."/>
            <person name="Clark A.G."/>
            <person name="Waterman M.S."/>
            <person name="Eichler E.E."/>
            <person name="Adams M.D."/>
            <person name="Hunkapiller M.W."/>
            <person name="Myers E.W."/>
            <person name="Venter J.C."/>
        </authorList>
    </citation>
    <scope>NUCLEOTIDE SEQUENCE [LARGE SCALE GENOMIC DNA]</scope>
</reference>
<reference key="3">
    <citation type="journal article" date="2004" name="Genome Res.">
        <title>The status, quality, and expansion of the NIH full-length cDNA project: the Mammalian Gene Collection (MGC).</title>
        <authorList>
            <consortium name="The MGC Project Team"/>
        </authorList>
    </citation>
    <scope>NUCLEOTIDE SEQUENCE [LARGE SCALE MRNA] (ISOFORM 1)</scope>
    <source>
        <tissue>Brain</tissue>
        <tissue>Lung</tissue>
        <tissue>Testis</tissue>
    </source>
</reference>
<reference key="4">
    <citation type="submission" date="2001-12" db="EMBL/GenBank/DDBJ databases">
        <title>Endocrine pancreas consortium.</title>
        <authorList>
            <person name="Melton D."/>
            <person name="Brown J."/>
            <person name="Kenty G."/>
            <person name="Permutt A."/>
            <person name="Lee C."/>
            <person name="Kaestner K."/>
            <person name="Lemishka I."/>
            <person name="Scearce M."/>
            <person name="Brestelli J."/>
            <person name="Gradwohl G."/>
            <person name="Clifton S."/>
            <person name="Hillier L."/>
            <person name="Marra M."/>
            <person name="Pape D."/>
            <person name="Wylie T."/>
            <person name="Martin J."/>
            <person name="Blistain A."/>
            <person name="Schmitt A."/>
            <person name="Theising B."/>
            <person name="Ritter E."/>
            <person name="Ronko I."/>
            <person name="Bennett J."/>
            <person name="Cardenas M."/>
            <person name="Gibbons M."/>
            <person name="McCann R."/>
            <person name="Cole R."/>
            <person name="Tsagareishvili R."/>
            <person name="Williams T."/>
            <person name="Jackson Y."/>
            <person name="Bowers Y."/>
        </authorList>
    </citation>
    <scope>NUCLEOTIDE SEQUENCE [LARGE SCALE MRNA] OF 1-153 (ISOFORM 2)</scope>
    <source>
        <tissue>Fetal pancreas</tissue>
    </source>
</reference>
<reference key="5">
    <citation type="journal article" date="2011" name="BMC Syst. Biol.">
        <title>Initial characterization of the human central proteome.</title>
        <authorList>
            <person name="Burkard T.R."/>
            <person name="Planyavsky M."/>
            <person name="Kaupe I."/>
            <person name="Breitwieser F.P."/>
            <person name="Buerckstuemmer T."/>
            <person name="Bennett K.L."/>
            <person name="Superti-Furga G."/>
            <person name="Colinge J."/>
        </authorList>
    </citation>
    <scope>IDENTIFICATION BY MASS SPECTROMETRY [LARGE SCALE ANALYSIS]</scope>
</reference>
<reference key="6">
    <citation type="journal article" date="2012" name="Proc. Natl. Acad. Sci. U.S.A.">
        <title>N-terminal acetylome analyses and functional insights of the N-terminal acetyltransferase NatB.</title>
        <authorList>
            <person name="Van Damme P."/>
            <person name="Lasa M."/>
            <person name="Polevoda B."/>
            <person name="Gazquez C."/>
            <person name="Elosegui-Artola A."/>
            <person name="Kim D.S."/>
            <person name="De Juan-Pardo E."/>
            <person name="Demeyer K."/>
            <person name="Hole K."/>
            <person name="Larrea E."/>
            <person name="Timmerman E."/>
            <person name="Prieto J."/>
            <person name="Arnesen T."/>
            <person name="Sherman F."/>
            <person name="Gevaert K."/>
            <person name="Aldabe R."/>
        </authorList>
    </citation>
    <scope>ACETYLATION [LARGE SCALE ANALYSIS] AT MET-1</scope>
    <scope>IDENTIFICATION BY MASS SPECTROMETRY [LARGE SCALE ANALYSIS]</scope>
</reference>
<reference key="7">
    <citation type="journal article" date="2013" name="J. Proteome Res.">
        <title>Toward a comprehensive characterization of a human cancer cell phosphoproteome.</title>
        <authorList>
            <person name="Zhou H."/>
            <person name="Di Palma S."/>
            <person name="Preisinger C."/>
            <person name="Peng M."/>
            <person name="Polat A.N."/>
            <person name="Heck A.J."/>
            <person name="Mohammed S."/>
        </authorList>
    </citation>
    <scope>PHOSPHORYLATION [LARGE SCALE ANALYSIS] AT SER-6</scope>
    <scope>IDENTIFICATION BY MASS SPECTROMETRY [LARGE SCALE ANALYSIS]</scope>
    <source>
        <tissue>Erythroleukemia</tissue>
    </source>
</reference>
<comment type="cofactor">
    <cofactor evidence="1">
        <name>[2Fe-2S] cluster</name>
        <dbReference type="ChEBI" id="CHEBI:190135"/>
    </cofactor>
    <text evidence="1">Binds 1 [2Fe-2S] cluster per subunit.</text>
</comment>
<comment type="interaction">
    <interactant intactId="EBI-10271664">
        <id>Q8TAC1</id>
    </interactant>
    <interactant intactId="EBI-10193656">
        <id>P09105</id>
        <label>HBQ1</label>
    </interactant>
    <organismsDiffer>false</organismsDiffer>
    <experiments>9</experiments>
</comment>
<comment type="alternative products">
    <event type="alternative splicing"/>
    <isoform>
        <id>Q8TAC1-1</id>
        <name>1</name>
        <sequence type="displayed"/>
    </isoform>
    <isoform>
        <id>Q8TAC1-2</id>
        <name>2</name>
        <sequence type="described" ref="VSP_044452"/>
    </isoform>
</comment>
<dbReference type="EMBL" id="AC008547">
    <property type="status" value="NOT_ANNOTATED_CDS"/>
    <property type="molecule type" value="Genomic_DNA"/>
</dbReference>
<dbReference type="EMBL" id="CH471084">
    <property type="protein sequence ID" value="EAW96043.1"/>
    <property type="molecule type" value="Genomic_DNA"/>
</dbReference>
<dbReference type="EMBL" id="CH471084">
    <property type="protein sequence ID" value="EAW96045.1"/>
    <property type="molecule type" value="Genomic_DNA"/>
</dbReference>
<dbReference type="EMBL" id="BC024023">
    <property type="protein sequence ID" value="AAH24023.1"/>
    <property type="molecule type" value="mRNA"/>
</dbReference>
<dbReference type="EMBL" id="BC035110">
    <property type="protein sequence ID" value="AAH35110.1"/>
    <property type="molecule type" value="mRNA"/>
</dbReference>
<dbReference type="EMBL" id="BC048979">
    <property type="protein sequence ID" value="AAH48979.1"/>
    <property type="molecule type" value="mRNA"/>
</dbReference>
<dbReference type="EMBL" id="BM263054">
    <property type="status" value="NOT_ANNOTATED_CDS"/>
    <property type="molecule type" value="mRNA"/>
</dbReference>
<dbReference type="CCDS" id="CCDS4075.1">
    <molecule id="Q8TAC1-1"/>
</dbReference>
<dbReference type="CCDS" id="CCDS47248.1">
    <molecule id="Q8TAC1-2"/>
</dbReference>
<dbReference type="RefSeq" id="NP_001124537.1">
    <molecule id="Q8TAC1-2"/>
    <property type="nucleotide sequence ID" value="NM_001131065.1"/>
</dbReference>
<dbReference type="RefSeq" id="NP_001124538.1">
    <molecule id="Q8TAC1-2"/>
    <property type="nucleotide sequence ID" value="NM_001131066.2"/>
</dbReference>
<dbReference type="RefSeq" id="NP_001362323.1">
    <molecule id="Q8TAC1-1"/>
    <property type="nucleotide sequence ID" value="NM_001375394.1"/>
</dbReference>
<dbReference type="RefSeq" id="NP_775498.1">
    <molecule id="Q8TAC1-1"/>
    <property type="nucleotide sequence ID" value="NM_173362.3"/>
</dbReference>
<dbReference type="RefSeq" id="XP_011541662.1">
    <molecule id="Q8TAC1-2"/>
    <property type="nucleotide sequence ID" value="XM_011543360.3"/>
</dbReference>
<dbReference type="RefSeq" id="XP_011541663.1">
    <property type="nucleotide sequence ID" value="XM_011543361.2"/>
</dbReference>
<dbReference type="RefSeq" id="XP_016864902.1">
    <molecule id="Q8TAC1-2"/>
    <property type="nucleotide sequence ID" value="XM_017009413.2"/>
</dbReference>
<dbReference type="RefSeq" id="XP_047273093.1">
    <molecule id="Q8TAC1-1"/>
    <property type="nucleotide sequence ID" value="XM_047417137.1"/>
</dbReference>
<dbReference type="RefSeq" id="XP_054208463.1">
    <molecule id="Q8TAC1-2"/>
    <property type="nucleotide sequence ID" value="XM_054352488.1"/>
</dbReference>
<dbReference type="RefSeq" id="XP_054208464.1">
    <molecule id="Q8TAC1-2"/>
    <property type="nucleotide sequence ID" value="XM_054352489.1"/>
</dbReference>
<dbReference type="RefSeq" id="XP_054208465.1">
    <molecule id="Q8TAC1-1"/>
    <property type="nucleotide sequence ID" value="XM_054352490.1"/>
</dbReference>
<dbReference type="SMR" id="Q8TAC1"/>
<dbReference type="BioGRID" id="130435">
    <property type="interactions" value="12"/>
</dbReference>
<dbReference type="FunCoup" id="Q8TAC1">
    <property type="interactions" value="46"/>
</dbReference>
<dbReference type="IntAct" id="Q8TAC1">
    <property type="interactions" value="7"/>
</dbReference>
<dbReference type="STRING" id="9606.ENSP00000413592"/>
<dbReference type="iPTMnet" id="Q8TAC1"/>
<dbReference type="PhosphoSitePlus" id="Q8TAC1"/>
<dbReference type="BioMuta" id="RFESD"/>
<dbReference type="DMDM" id="74730342"/>
<dbReference type="jPOST" id="Q8TAC1"/>
<dbReference type="MassIVE" id="Q8TAC1"/>
<dbReference type="PaxDb" id="9606-ENSP00000413592"/>
<dbReference type="PeptideAtlas" id="Q8TAC1"/>
<dbReference type="ProteomicsDB" id="73854">
    <molecule id="Q8TAC1-1"/>
</dbReference>
<dbReference type="Pumba" id="Q8TAC1"/>
<dbReference type="Antibodypedia" id="4298">
    <property type="antibodies" value="174 antibodies from 18 providers"/>
</dbReference>
<dbReference type="DNASU" id="317671"/>
<dbReference type="Ensembl" id="ENST00000311364.9">
    <molecule id="Q8TAC1-1"/>
    <property type="protein sequence ID" value="ENSP00000309229.4"/>
    <property type="gene ID" value="ENSG00000175449.15"/>
</dbReference>
<dbReference type="Ensembl" id="ENST00000380005.9">
    <molecule id="Q8TAC1-2"/>
    <property type="protein sequence ID" value="ENSP00000369341.4"/>
    <property type="gene ID" value="ENSG00000175449.15"/>
</dbReference>
<dbReference type="Ensembl" id="ENST00000458310.2">
    <molecule id="Q8TAC1-2"/>
    <property type="protein sequence ID" value="ENSP00000413592.1"/>
    <property type="gene ID" value="ENSG00000175449.15"/>
</dbReference>
<dbReference type="Ensembl" id="ENST00000511684.6">
    <molecule id="Q8TAC1-1"/>
    <property type="protein sequence ID" value="ENSP00000422520.2"/>
    <property type="gene ID" value="ENSG00000175449.15"/>
</dbReference>
<dbReference type="GeneID" id="317671"/>
<dbReference type="KEGG" id="hsa:317671"/>
<dbReference type="MANE-Select" id="ENST00000380005.9">
    <molecule id="Q8TAC1-2"/>
    <property type="protein sequence ID" value="ENSP00000369341.4"/>
    <property type="RefSeq nucleotide sequence ID" value="NM_001131066.2"/>
    <property type="RefSeq protein sequence ID" value="NP_001124538.1"/>
</dbReference>
<dbReference type="UCSC" id="uc003klf.4">
    <molecule id="Q8TAC1-1"/>
    <property type="organism name" value="human"/>
</dbReference>
<dbReference type="AGR" id="HGNC:29587"/>
<dbReference type="CTD" id="317671"/>
<dbReference type="DisGeNET" id="317671"/>
<dbReference type="GeneCards" id="RFESD"/>
<dbReference type="HGNC" id="HGNC:29587">
    <property type="gene designation" value="RFESD"/>
</dbReference>
<dbReference type="HPA" id="ENSG00000175449">
    <property type="expression patterns" value="Tissue enhanced (bone)"/>
</dbReference>
<dbReference type="neXtProt" id="NX_Q8TAC1"/>
<dbReference type="OpenTargets" id="ENSG00000175449"/>
<dbReference type="PharmGKB" id="PA162401171"/>
<dbReference type="VEuPathDB" id="HostDB:ENSG00000175449"/>
<dbReference type="eggNOG" id="ENOG502S06W">
    <property type="taxonomic scope" value="Eukaryota"/>
</dbReference>
<dbReference type="GeneTree" id="ENSGT00390000018225"/>
<dbReference type="HOGENOM" id="CLU_113767_0_0_1"/>
<dbReference type="InParanoid" id="Q8TAC1"/>
<dbReference type="OMA" id="SAVPKWC"/>
<dbReference type="OrthoDB" id="426882at2759"/>
<dbReference type="PAN-GO" id="Q8TAC1">
    <property type="GO annotations" value="0 GO annotations based on evolutionary models"/>
</dbReference>
<dbReference type="PhylomeDB" id="Q8TAC1"/>
<dbReference type="TreeFam" id="TF333320"/>
<dbReference type="PathwayCommons" id="Q8TAC1"/>
<dbReference type="SignaLink" id="Q8TAC1"/>
<dbReference type="BioGRID-ORCS" id="317671">
    <property type="hits" value="6 hits in 1115 CRISPR screens"/>
</dbReference>
<dbReference type="GenomeRNAi" id="317671"/>
<dbReference type="Pharos" id="Q8TAC1">
    <property type="development level" value="Tdark"/>
</dbReference>
<dbReference type="PRO" id="PR:Q8TAC1"/>
<dbReference type="Proteomes" id="UP000005640">
    <property type="component" value="Chromosome 5"/>
</dbReference>
<dbReference type="RNAct" id="Q8TAC1">
    <property type="molecule type" value="protein"/>
</dbReference>
<dbReference type="Bgee" id="ENSG00000175449">
    <property type="expression patterns" value="Expressed in secondary oocyte and 112 other cell types or tissues"/>
</dbReference>
<dbReference type="ExpressionAtlas" id="Q8TAC1">
    <property type="expression patterns" value="baseline and differential"/>
</dbReference>
<dbReference type="GO" id="GO:0051537">
    <property type="term" value="F:2 iron, 2 sulfur cluster binding"/>
    <property type="evidence" value="ECO:0000318"/>
    <property type="project" value="GO_Central"/>
</dbReference>
<dbReference type="GO" id="GO:0046872">
    <property type="term" value="F:metal ion binding"/>
    <property type="evidence" value="ECO:0007669"/>
    <property type="project" value="UniProtKB-KW"/>
</dbReference>
<dbReference type="CDD" id="cd03467">
    <property type="entry name" value="Rieske"/>
    <property type="match status" value="1"/>
</dbReference>
<dbReference type="FunFam" id="2.102.10.10:FF:000009">
    <property type="entry name" value="Rieske Fe-S domain containing"/>
    <property type="match status" value="1"/>
</dbReference>
<dbReference type="Gene3D" id="2.102.10.10">
    <property type="entry name" value="Rieske [2Fe-2S] iron-sulphur domain"/>
    <property type="match status" value="1"/>
</dbReference>
<dbReference type="InterPro" id="IPR017941">
    <property type="entry name" value="Rieske_2Fe-2S"/>
</dbReference>
<dbReference type="InterPro" id="IPR036922">
    <property type="entry name" value="Rieske_2Fe-2S_sf"/>
</dbReference>
<dbReference type="InterPro" id="IPR054716">
    <property type="entry name" value="Sol_Rieske_ferrdox_dom"/>
</dbReference>
<dbReference type="PANTHER" id="PTHR21496">
    <property type="entry name" value="FERREDOXIN-RELATED"/>
    <property type="match status" value="1"/>
</dbReference>
<dbReference type="PANTHER" id="PTHR21496:SF0">
    <property type="entry name" value="RIESKE DOMAIN-CONTAINING PROTEIN"/>
    <property type="match status" value="1"/>
</dbReference>
<dbReference type="Pfam" id="PF22543">
    <property type="entry name" value="Rieske_4"/>
    <property type="match status" value="1"/>
</dbReference>
<dbReference type="SUPFAM" id="SSF50022">
    <property type="entry name" value="ISP domain"/>
    <property type="match status" value="1"/>
</dbReference>
<dbReference type="PROSITE" id="PS51296">
    <property type="entry name" value="RIESKE"/>
    <property type="match status" value="1"/>
</dbReference>